<feature type="chain" id="PRO_0000179142" description="Phosphate acetyltransferase">
    <location>
        <begin position="1"/>
        <end position="328"/>
    </location>
</feature>
<dbReference type="EC" id="2.3.1.8"/>
<dbReference type="EMBL" id="BA000018">
    <property type="protein sequence ID" value="BAB41777.1"/>
    <property type="molecule type" value="Genomic_DNA"/>
</dbReference>
<dbReference type="PIR" id="F89827">
    <property type="entry name" value="F89827"/>
</dbReference>
<dbReference type="RefSeq" id="WP_000774281.1">
    <property type="nucleotide sequence ID" value="NC_002745.2"/>
</dbReference>
<dbReference type="SMR" id="P99092"/>
<dbReference type="EnsemblBacteria" id="BAB41777">
    <property type="protein sequence ID" value="BAB41777"/>
    <property type="gene ID" value="BAB41777"/>
</dbReference>
<dbReference type="KEGG" id="sau:SA0545"/>
<dbReference type="HOGENOM" id="CLU_019723_0_1_9"/>
<dbReference type="UniPathway" id="UPA00340">
    <property type="reaction ID" value="UER00459"/>
</dbReference>
<dbReference type="GO" id="GO:0005737">
    <property type="term" value="C:cytoplasm"/>
    <property type="evidence" value="ECO:0007669"/>
    <property type="project" value="UniProtKB-SubCell"/>
</dbReference>
<dbReference type="GO" id="GO:0008959">
    <property type="term" value="F:phosphate acetyltransferase activity"/>
    <property type="evidence" value="ECO:0007669"/>
    <property type="project" value="UniProtKB-EC"/>
</dbReference>
<dbReference type="GO" id="GO:0006085">
    <property type="term" value="P:acetyl-CoA biosynthetic process"/>
    <property type="evidence" value="ECO:0007669"/>
    <property type="project" value="UniProtKB-UniPathway"/>
</dbReference>
<dbReference type="Gene3D" id="3.40.50.10950">
    <property type="match status" value="1"/>
</dbReference>
<dbReference type="Gene3D" id="3.40.50.10750">
    <property type="entry name" value="Isocitrate/Isopropylmalate dehydrogenase-like"/>
    <property type="match status" value="1"/>
</dbReference>
<dbReference type="InterPro" id="IPR012147">
    <property type="entry name" value="P_Ac_Bu_trans"/>
</dbReference>
<dbReference type="InterPro" id="IPR004614">
    <property type="entry name" value="P_AcTrfase"/>
</dbReference>
<dbReference type="InterPro" id="IPR042113">
    <property type="entry name" value="P_AcTrfase_dom1"/>
</dbReference>
<dbReference type="InterPro" id="IPR042112">
    <property type="entry name" value="P_AcTrfase_dom2"/>
</dbReference>
<dbReference type="InterPro" id="IPR050500">
    <property type="entry name" value="Phos_Acetyltrans/Butyryltrans"/>
</dbReference>
<dbReference type="InterPro" id="IPR002505">
    <property type="entry name" value="PTA_PTB"/>
</dbReference>
<dbReference type="NCBIfam" id="NF007233">
    <property type="entry name" value="PRK09653.1"/>
    <property type="match status" value="1"/>
</dbReference>
<dbReference type="NCBIfam" id="TIGR00651">
    <property type="entry name" value="pta"/>
    <property type="match status" value="1"/>
</dbReference>
<dbReference type="PANTHER" id="PTHR43356">
    <property type="entry name" value="PHOSPHATE ACETYLTRANSFERASE"/>
    <property type="match status" value="1"/>
</dbReference>
<dbReference type="PANTHER" id="PTHR43356:SF3">
    <property type="entry name" value="PHOSPHATE ACETYLTRANSFERASE"/>
    <property type="match status" value="1"/>
</dbReference>
<dbReference type="Pfam" id="PF01515">
    <property type="entry name" value="PTA_PTB"/>
    <property type="match status" value="1"/>
</dbReference>
<dbReference type="PIRSF" id="PIRSF000428">
    <property type="entry name" value="P_Ac_trans"/>
    <property type="match status" value="1"/>
</dbReference>
<dbReference type="SUPFAM" id="SSF53659">
    <property type="entry name" value="Isocitrate/Isopropylmalate dehydrogenase-like"/>
    <property type="match status" value="1"/>
</dbReference>
<comment type="catalytic activity">
    <reaction>
        <text>acetyl-CoA + phosphate = acetyl phosphate + CoA</text>
        <dbReference type="Rhea" id="RHEA:19521"/>
        <dbReference type="ChEBI" id="CHEBI:22191"/>
        <dbReference type="ChEBI" id="CHEBI:43474"/>
        <dbReference type="ChEBI" id="CHEBI:57287"/>
        <dbReference type="ChEBI" id="CHEBI:57288"/>
        <dbReference type="EC" id="2.3.1.8"/>
    </reaction>
</comment>
<comment type="pathway">
    <text>Metabolic intermediate biosynthesis; acetyl-CoA biosynthesis; acetyl-CoA from acetate: step 2/2.</text>
</comment>
<comment type="subcellular location">
    <subcellularLocation>
        <location evidence="1">Cytoplasm</location>
    </subcellularLocation>
</comment>
<comment type="similarity">
    <text evidence="1">Belongs to the phosphate acetyltransferase and butyryltransferase family.</text>
</comment>
<reference key="1">
    <citation type="journal article" date="2001" name="Lancet">
        <title>Whole genome sequencing of meticillin-resistant Staphylococcus aureus.</title>
        <authorList>
            <person name="Kuroda M."/>
            <person name="Ohta T."/>
            <person name="Uchiyama I."/>
            <person name="Baba T."/>
            <person name="Yuzawa H."/>
            <person name="Kobayashi I."/>
            <person name="Cui L."/>
            <person name="Oguchi A."/>
            <person name="Aoki K."/>
            <person name="Nagai Y."/>
            <person name="Lian J.-Q."/>
            <person name="Ito T."/>
            <person name="Kanamori M."/>
            <person name="Matsumaru H."/>
            <person name="Maruyama A."/>
            <person name="Murakami H."/>
            <person name="Hosoyama A."/>
            <person name="Mizutani-Ui Y."/>
            <person name="Takahashi N.K."/>
            <person name="Sawano T."/>
            <person name="Inoue R."/>
            <person name="Kaito C."/>
            <person name="Sekimizu K."/>
            <person name="Hirakawa H."/>
            <person name="Kuhara S."/>
            <person name="Goto S."/>
            <person name="Yabuzaki J."/>
            <person name="Kanehisa M."/>
            <person name="Yamashita A."/>
            <person name="Oshima K."/>
            <person name="Furuya K."/>
            <person name="Yoshino C."/>
            <person name="Shiba T."/>
            <person name="Hattori M."/>
            <person name="Ogasawara N."/>
            <person name="Hayashi H."/>
            <person name="Hiramatsu K."/>
        </authorList>
    </citation>
    <scope>NUCLEOTIDE SEQUENCE [LARGE SCALE GENOMIC DNA]</scope>
    <source>
        <strain>N315</strain>
    </source>
</reference>
<reference key="2">
    <citation type="journal article" date="2005" name="J. Microbiol. Methods">
        <title>Correlation of proteomic and transcriptomic profiles of Staphylococcus aureus during the post-exponential phase of growth.</title>
        <authorList>
            <person name="Scherl A."/>
            <person name="Francois P."/>
            <person name="Bento M."/>
            <person name="Deshusses J.M."/>
            <person name="Charbonnier Y."/>
            <person name="Converset V."/>
            <person name="Huyghe A."/>
            <person name="Walter N."/>
            <person name="Hoogland C."/>
            <person name="Appel R.D."/>
            <person name="Sanchez J.-C."/>
            <person name="Zimmermann-Ivol C.G."/>
            <person name="Corthals G.L."/>
            <person name="Hochstrasser D.F."/>
            <person name="Schrenzel J."/>
        </authorList>
    </citation>
    <scope>IDENTIFICATION BY MASS SPECTROMETRY</scope>
    <source>
        <strain>N315</strain>
    </source>
</reference>
<reference key="3">
    <citation type="submission" date="2007-10" db="UniProtKB">
        <title>Shotgun proteomic analysis of total and membrane protein extracts of S. aureus strain N315.</title>
        <authorList>
            <person name="Vaezzadeh A.R."/>
            <person name="Deshusses J."/>
            <person name="Lescuyer P."/>
            <person name="Hochstrasser D.F."/>
        </authorList>
    </citation>
    <scope>IDENTIFICATION BY MASS SPECTROMETRY [LARGE SCALE ANALYSIS]</scope>
    <source>
        <strain>N315</strain>
    </source>
</reference>
<name>PTAS_STAAN</name>
<keyword id="KW-0012">Acyltransferase</keyword>
<keyword id="KW-0963">Cytoplasm</keyword>
<keyword id="KW-0808">Transferase</keyword>
<organism>
    <name type="scientific">Staphylococcus aureus (strain N315)</name>
    <dbReference type="NCBI Taxonomy" id="158879"/>
    <lineage>
        <taxon>Bacteria</taxon>
        <taxon>Bacillati</taxon>
        <taxon>Bacillota</taxon>
        <taxon>Bacilli</taxon>
        <taxon>Bacillales</taxon>
        <taxon>Staphylococcaceae</taxon>
        <taxon>Staphylococcus</taxon>
    </lineage>
</organism>
<proteinExistence type="evidence at protein level"/>
<accession>P99092</accession>
<accession>Q99W23</accession>
<evidence type="ECO:0000305" key="1"/>
<sequence>MADLLNVLKDKLSGKNVKIVLPEGEDERVLTAATQLQATDYVTPIVLGDETKVQSLAQKLDLDISNIELINPATSELKAELVQSFVERRKGKATEEQAQELLNNVNYFGTMLVYAGKADGLVSGAAHSTGDTVRPALQIIKTKPGVSRTSGIFFMIKGDEQYIFGDCAINPELDSQGLAEIAVESAKSALSFGMDPKVAMLSFSTKGSAKSDDVTKVQEAVKLAQQKAEEEKLEAIIDGEFQFDAAIVPGVAEKKAPGAKLQGDANVFVFPSLEAGNIGYKIAQRLGGYDAVGPVLQGLNSPVNDLSRGCSIEDVYNLSIITAAQALQ</sequence>
<gene>
    <name type="primary">pta</name>
    <name type="ordered locus">SA0545</name>
</gene>
<protein>
    <recommendedName>
        <fullName>Phosphate acetyltransferase</fullName>
        <ecNumber>2.3.1.8</ecNumber>
    </recommendedName>
    <alternativeName>
        <fullName>Phosphotransacetylase</fullName>
    </alternativeName>
</protein>